<proteinExistence type="inferred from homology"/>
<feature type="chain" id="PRO_0000405042" description="Lissencephaly-1 homolog">
    <location>
        <begin position="1"/>
        <end position="411"/>
    </location>
</feature>
<feature type="domain" description="LisH" evidence="1">
    <location>
        <begin position="9"/>
        <end position="41"/>
    </location>
</feature>
<feature type="repeat" description="WD 1">
    <location>
        <begin position="106"/>
        <end position="147"/>
    </location>
</feature>
<feature type="repeat" description="WD 2">
    <location>
        <begin position="148"/>
        <end position="187"/>
    </location>
</feature>
<feature type="repeat" description="WD 3">
    <location>
        <begin position="191"/>
        <end position="230"/>
    </location>
</feature>
<feature type="repeat" description="WD 4">
    <location>
        <begin position="233"/>
        <end position="272"/>
    </location>
</feature>
<feature type="repeat" description="WD 5">
    <location>
        <begin position="275"/>
        <end position="334"/>
    </location>
</feature>
<feature type="repeat" description="WD 6">
    <location>
        <begin position="337"/>
        <end position="376"/>
    </location>
</feature>
<feature type="repeat" description="WD 7">
    <location>
        <begin position="379"/>
        <end position="411"/>
    </location>
</feature>
<feature type="coiled-coil region" evidence="1">
    <location>
        <begin position="56"/>
        <end position="83"/>
    </location>
</feature>
<comment type="function">
    <text evidence="1">Positively regulates the activity of the minus-end directed microtubule motor protein dynein. May enhance dynein-mediated microtubule sliding by targeting dynein to the microtubule plus end. Required for several dynein- and microtubule-dependent processes.</text>
</comment>
<comment type="subcellular location">
    <subcellularLocation>
        <location evidence="1">Cytoplasm</location>
        <location evidence="1">Cytoskeleton</location>
    </subcellularLocation>
    <subcellularLocation>
        <location evidence="1">Cytoplasm</location>
        <location evidence="1">Cytoskeleton</location>
        <location evidence="1">Microtubule organizing center</location>
        <location evidence="1">Centrosome</location>
    </subcellularLocation>
    <text evidence="1">Localizes to the plus end of microtubules and to the centrosome.</text>
</comment>
<comment type="domain">
    <text evidence="1">Dimerization mediated by the LisH domain may be required to activate dynein.</text>
</comment>
<comment type="similarity">
    <text evidence="1">Belongs to the WD repeat LIS1/nudF family.</text>
</comment>
<reference key="1">
    <citation type="journal article" date="2007" name="Nature">
        <title>Evolution of genes and genomes on the Drosophila phylogeny.</title>
        <authorList>
            <consortium name="Drosophila 12 genomes consortium"/>
        </authorList>
    </citation>
    <scope>NUCLEOTIDE SEQUENCE [LARGE SCALE GENOMIC DNA]</scope>
    <source>
        <strain>Tucson 15287-2541.00</strain>
    </source>
</reference>
<organism>
    <name type="scientific">Drosophila grimshawi</name>
    <name type="common">Hawaiian fruit fly</name>
    <name type="synonym">Idiomyia grimshawi</name>
    <dbReference type="NCBI Taxonomy" id="7222"/>
    <lineage>
        <taxon>Eukaryota</taxon>
        <taxon>Metazoa</taxon>
        <taxon>Ecdysozoa</taxon>
        <taxon>Arthropoda</taxon>
        <taxon>Hexapoda</taxon>
        <taxon>Insecta</taxon>
        <taxon>Pterygota</taxon>
        <taxon>Neoptera</taxon>
        <taxon>Endopterygota</taxon>
        <taxon>Diptera</taxon>
        <taxon>Brachycera</taxon>
        <taxon>Muscomorpha</taxon>
        <taxon>Ephydroidea</taxon>
        <taxon>Drosophilidae</taxon>
        <taxon>Drosophila</taxon>
        <taxon>Hawaiian Drosophila</taxon>
    </lineage>
</organism>
<dbReference type="EMBL" id="CH916375">
    <property type="protein sequence ID" value="EDV98239.1"/>
    <property type="molecule type" value="Genomic_DNA"/>
</dbReference>
<dbReference type="SMR" id="B4JWA1"/>
<dbReference type="FunCoup" id="B4JWA1">
    <property type="interactions" value="2010"/>
</dbReference>
<dbReference type="STRING" id="7222.B4JWA1"/>
<dbReference type="EnsemblMetazoa" id="FBtr0158191">
    <property type="protein sequence ID" value="FBpp0156683"/>
    <property type="gene ID" value="FBgn0130234"/>
</dbReference>
<dbReference type="EnsemblMetazoa" id="FBtr0463959">
    <property type="protein sequence ID" value="FBpp0414267"/>
    <property type="gene ID" value="FBgn0130234"/>
</dbReference>
<dbReference type="EnsemblMetazoa" id="FBtr0464559">
    <property type="protein sequence ID" value="FBpp0414842"/>
    <property type="gene ID" value="FBgn0130234"/>
</dbReference>
<dbReference type="EnsemblMetazoa" id="XM_001995131.3">
    <property type="protein sequence ID" value="XP_001995167.1"/>
    <property type="gene ID" value="LOC6568808"/>
</dbReference>
<dbReference type="EnsemblMetazoa" id="XM_032741172.2">
    <property type="protein sequence ID" value="XP_032597063.1"/>
    <property type="gene ID" value="LOC6568808"/>
</dbReference>
<dbReference type="EnsemblMetazoa" id="XM_032741173.2">
    <property type="protein sequence ID" value="XP_032597064.1"/>
    <property type="gene ID" value="LOC6568808"/>
</dbReference>
<dbReference type="EnsemblMetazoa" id="XM_032741174.2">
    <property type="protein sequence ID" value="XP_032597065.1"/>
    <property type="gene ID" value="LOC6568808"/>
</dbReference>
<dbReference type="GeneID" id="6568808"/>
<dbReference type="KEGG" id="dgr:6568808"/>
<dbReference type="CTD" id="36791"/>
<dbReference type="eggNOG" id="KOG0295">
    <property type="taxonomic scope" value="Eukaryota"/>
</dbReference>
<dbReference type="HOGENOM" id="CLU_000288_57_15_1"/>
<dbReference type="InParanoid" id="B4JWA1"/>
<dbReference type="OMA" id="WHVATKE"/>
<dbReference type="OrthoDB" id="674604at2759"/>
<dbReference type="PhylomeDB" id="B4JWA1"/>
<dbReference type="Proteomes" id="UP000001070">
    <property type="component" value="Unassembled WGS sequence"/>
</dbReference>
<dbReference type="GO" id="GO:1904115">
    <property type="term" value="C:axon cytoplasm"/>
    <property type="evidence" value="ECO:0007669"/>
    <property type="project" value="GOC"/>
</dbReference>
<dbReference type="GO" id="GO:0005938">
    <property type="term" value="C:cell cortex"/>
    <property type="evidence" value="ECO:0007669"/>
    <property type="project" value="EnsemblMetazoa"/>
</dbReference>
<dbReference type="GO" id="GO:0030425">
    <property type="term" value="C:dendrite"/>
    <property type="evidence" value="ECO:0007669"/>
    <property type="project" value="EnsemblMetazoa"/>
</dbReference>
<dbReference type="GO" id="GO:0005869">
    <property type="term" value="C:dynactin complex"/>
    <property type="evidence" value="ECO:0007669"/>
    <property type="project" value="EnsemblMetazoa"/>
</dbReference>
<dbReference type="GO" id="GO:0030286">
    <property type="term" value="C:dynein complex"/>
    <property type="evidence" value="ECO:0007669"/>
    <property type="project" value="EnsemblMetazoa"/>
</dbReference>
<dbReference type="GO" id="GO:0030426">
    <property type="term" value="C:growth cone"/>
    <property type="evidence" value="ECO:0007669"/>
    <property type="project" value="EnsemblMetazoa"/>
</dbReference>
<dbReference type="GO" id="GO:0000776">
    <property type="term" value="C:kinetochore"/>
    <property type="evidence" value="ECO:0007669"/>
    <property type="project" value="EnsemblMetazoa"/>
</dbReference>
<dbReference type="GO" id="GO:0005828">
    <property type="term" value="C:kinetochore microtubule"/>
    <property type="evidence" value="ECO:0007669"/>
    <property type="project" value="EnsemblMetazoa"/>
</dbReference>
<dbReference type="GO" id="GO:0043025">
    <property type="term" value="C:neuronal cell body"/>
    <property type="evidence" value="ECO:0007669"/>
    <property type="project" value="EnsemblMetazoa"/>
</dbReference>
<dbReference type="GO" id="GO:0031616">
    <property type="term" value="C:spindle pole centrosome"/>
    <property type="evidence" value="ECO:0007669"/>
    <property type="project" value="EnsemblMetazoa"/>
</dbReference>
<dbReference type="GO" id="GO:0070840">
    <property type="term" value="F:dynein complex binding"/>
    <property type="evidence" value="ECO:0007669"/>
    <property type="project" value="UniProtKB-UniRule"/>
</dbReference>
<dbReference type="GO" id="GO:0007298">
    <property type="term" value="P:border follicle cell migration"/>
    <property type="evidence" value="ECO:0007669"/>
    <property type="project" value="EnsemblMetazoa"/>
</dbReference>
<dbReference type="GO" id="GO:0051642">
    <property type="term" value="P:centrosome localization"/>
    <property type="evidence" value="ECO:0007669"/>
    <property type="project" value="EnsemblMetazoa"/>
</dbReference>
<dbReference type="GO" id="GO:0051299">
    <property type="term" value="P:centrosome separation"/>
    <property type="evidence" value="ECO:0007669"/>
    <property type="project" value="EnsemblMetazoa"/>
</dbReference>
<dbReference type="GO" id="GO:0030381">
    <property type="term" value="P:chorion-containing eggshell pattern formation"/>
    <property type="evidence" value="ECO:0007669"/>
    <property type="project" value="EnsemblMetazoa"/>
</dbReference>
<dbReference type="GO" id="GO:0061883">
    <property type="term" value="P:clathrin-dependent endocytosis involved in vitellogenesis"/>
    <property type="evidence" value="ECO:0007669"/>
    <property type="project" value="EnsemblMetazoa"/>
</dbReference>
<dbReference type="GO" id="GO:0048813">
    <property type="term" value="P:dendrite morphogenesis"/>
    <property type="evidence" value="ECO:0007669"/>
    <property type="project" value="EnsemblMetazoa"/>
</dbReference>
<dbReference type="GO" id="GO:0000132">
    <property type="term" value="P:establishment of mitotic spindle orientation"/>
    <property type="evidence" value="ECO:0007669"/>
    <property type="project" value="UniProtKB-UniRule"/>
</dbReference>
<dbReference type="GO" id="GO:0048142">
    <property type="term" value="P:germarium-derived cystoblast division"/>
    <property type="evidence" value="ECO:0007669"/>
    <property type="project" value="EnsemblMetazoa"/>
</dbReference>
<dbReference type="GO" id="GO:0007294">
    <property type="term" value="P:germarium-derived oocyte fate determination"/>
    <property type="evidence" value="ECO:0007669"/>
    <property type="project" value="EnsemblMetazoa"/>
</dbReference>
<dbReference type="GO" id="GO:0008298">
    <property type="term" value="P:intracellular mRNA localization"/>
    <property type="evidence" value="ECO:0007669"/>
    <property type="project" value="EnsemblMetazoa"/>
</dbReference>
<dbReference type="GO" id="GO:0006886">
    <property type="term" value="P:intracellular protein transport"/>
    <property type="evidence" value="ECO:0007669"/>
    <property type="project" value="EnsemblMetazoa"/>
</dbReference>
<dbReference type="GO" id="GO:0051383">
    <property type="term" value="P:kinetochore organization"/>
    <property type="evidence" value="ECO:0007669"/>
    <property type="project" value="EnsemblMetazoa"/>
</dbReference>
<dbReference type="GO" id="GO:0051012">
    <property type="term" value="P:microtubule sliding"/>
    <property type="evidence" value="ECO:0007669"/>
    <property type="project" value="UniProtKB-UniRule"/>
</dbReference>
<dbReference type="GO" id="GO:0046716">
    <property type="term" value="P:muscle cell cellular homeostasis"/>
    <property type="evidence" value="ECO:0007669"/>
    <property type="project" value="EnsemblMetazoa"/>
</dbReference>
<dbReference type="GO" id="GO:0016319">
    <property type="term" value="P:mushroom body development"/>
    <property type="evidence" value="ECO:0007669"/>
    <property type="project" value="EnsemblMetazoa"/>
</dbReference>
<dbReference type="GO" id="GO:0007405">
    <property type="term" value="P:neuroblast proliferation"/>
    <property type="evidence" value="ECO:0007669"/>
    <property type="project" value="EnsemblMetazoa"/>
</dbReference>
<dbReference type="GO" id="GO:0030473">
    <property type="term" value="P:nuclear migration along microtubule"/>
    <property type="evidence" value="ECO:0007669"/>
    <property type="project" value="EnsemblMetazoa"/>
</dbReference>
<dbReference type="GO" id="GO:0007312">
    <property type="term" value="P:oocyte nucleus migration involved in oocyte dorsal/ventral axis specification"/>
    <property type="evidence" value="ECO:0007669"/>
    <property type="project" value="EnsemblMetazoa"/>
</dbReference>
<dbReference type="GO" id="GO:0030723">
    <property type="term" value="P:ovarian fusome organization"/>
    <property type="evidence" value="ECO:0007669"/>
    <property type="project" value="EnsemblMetazoa"/>
</dbReference>
<dbReference type="GO" id="GO:0007300">
    <property type="term" value="P:ovarian nurse cell to oocyte transport"/>
    <property type="evidence" value="ECO:0007669"/>
    <property type="project" value="EnsemblMetazoa"/>
</dbReference>
<dbReference type="GO" id="GO:0072499">
    <property type="term" value="P:photoreceptor cell axon guidance"/>
    <property type="evidence" value="ECO:0007669"/>
    <property type="project" value="EnsemblMetazoa"/>
</dbReference>
<dbReference type="GO" id="GO:0050772">
    <property type="term" value="P:positive regulation of axonogenesis"/>
    <property type="evidence" value="ECO:0007669"/>
    <property type="project" value="EnsemblMetazoa"/>
</dbReference>
<dbReference type="GO" id="GO:0030513">
    <property type="term" value="P:positive regulation of BMP signaling pathway"/>
    <property type="evidence" value="ECO:0007669"/>
    <property type="project" value="EnsemblMetazoa"/>
</dbReference>
<dbReference type="GO" id="GO:0045842">
    <property type="term" value="P:positive regulation of mitotic metaphase/anaphase transition"/>
    <property type="evidence" value="ECO:0007669"/>
    <property type="project" value="EnsemblMetazoa"/>
</dbReference>
<dbReference type="GO" id="GO:0034501">
    <property type="term" value="P:protein localization to kinetochore"/>
    <property type="evidence" value="ECO:0007669"/>
    <property type="project" value="EnsemblMetazoa"/>
</dbReference>
<dbReference type="GO" id="GO:0048814">
    <property type="term" value="P:regulation of dendrite morphogenesis"/>
    <property type="evidence" value="ECO:0007669"/>
    <property type="project" value="EnsemblMetazoa"/>
</dbReference>
<dbReference type="GO" id="GO:0008090">
    <property type="term" value="P:retrograde axonal transport"/>
    <property type="evidence" value="ECO:0007669"/>
    <property type="project" value="EnsemblMetazoa"/>
</dbReference>
<dbReference type="GO" id="GO:0042052">
    <property type="term" value="P:rhabdomere development"/>
    <property type="evidence" value="ECO:0007669"/>
    <property type="project" value="EnsemblMetazoa"/>
</dbReference>
<dbReference type="GO" id="GO:0007283">
    <property type="term" value="P:spermatogenesis"/>
    <property type="evidence" value="ECO:0007669"/>
    <property type="project" value="EnsemblMetazoa"/>
</dbReference>
<dbReference type="GO" id="GO:0051225">
    <property type="term" value="P:spindle assembly"/>
    <property type="evidence" value="ECO:0007669"/>
    <property type="project" value="EnsemblMetazoa"/>
</dbReference>
<dbReference type="GO" id="GO:0019827">
    <property type="term" value="P:stem cell population maintenance"/>
    <property type="evidence" value="ECO:0007669"/>
    <property type="project" value="EnsemblMetazoa"/>
</dbReference>
<dbReference type="CDD" id="cd00200">
    <property type="entry name" value="WD40"/>
    <property type="match status" value="1"/>
</dbReference>
<dbReference type="FunFam" id="2.130.10.10:FF:000038">
    <property type="entry name" value="Lissencephaly-1 homolog B"/>
    <property type="match status" value="1"/>
</dbReference>
<dbReference type="FunFam" id="1.20.960.30:FF:000002">
    <property type="entry name" value="Platelet-activating factor acetylhydrolase ib"/>
    <property type="match status" value="1"/>
</dbReference>
<dbReference type="Gene3D" id="1.20.960.30">
    <property type="match status" value="1"/>
</dbReference>
<dbReference type="Gene3D" id="2.130.10.10">
    <property type="entry name" value="YVTN repeat-like/Quinoprotein amine dehydrogenase"/>
    <property type="match status" value="1"/>
</dbReference>
<dbReference type="HAMAP" id="MF_03141">
    <property type="entry name" value="lis1"/>
    <property type="match status" value="1"/>
</dbReference>
<dbReference type="InterPro" id="IPR017252">
    <property type="entry name" value="Dynein_regulator_LIS1"/>
</dbReference>
<dbReference type="InterPro" id="IPR020472">
    <property type="entry name" value="G-protein_beta_WD-40_rep"/>
</dbReference>
<dbReference type="InterPro" id="IPR037190">
    <property type="entry name" value="LIS1_N"/>
</dbReference>
<dbReference type="InterPro" id="IPR006594">
    <property type="entry name" value="LisH"/>
</dbReference>
<dbReference type="InterPro" id="IPR056795">
    <property type="entry name" value="PAC1-like_LisH-like_dom"/>
</dbReference>
<dbReference type="InterPro" id="IPR015943">
    <property type="entry name" value="WD40/YVTN_repeat-like_dom_sf"/>
</dbReference>
<dbReference type="InterPro" id="IPR019775">
    <property type="entry name" value="WD40_repeat_CS"/>
</dbReference>
<dbReference type="InterPro" id="IPR036322">
    <property type="entry name" value="WD40_repeat_dom_sf"/>
</dbReference>
<dbReference type="InterPro" id="IPR001680">
    <property type="entry name" value="WD40_rpt"/>
</dbReference>
<dbReference type="InterPro" id="IPR050349">
    <property type="entry name" value="WD_LIS1/nudF_dynein_reg"/>
</dbReference>
<dbReference type="PANTHER" id="PTHR44129">
    <property type="entry name" value="WD REPEAT-CONTAINING PROTEIN POP1"/>
    <property type="match status" value="1"/>
</dbReference>
<dbReference type="Pfam" id="PF24951">
    <property type="entry name" value="LisH_PAC1"/>
    <property type="match status" value="1"/>
</dbReference>
<dbReference type="Pfam" id="PF00400">
    <property type="entry name" value="WD40"/>
    <property type="match status" value="7"/>
</dbReference>
<dbReference type="PIRSF" id="PIRSF037647">
    <property type="entry name" value="Dynein_regulator_Lis1"/>
    <property type="match status" value="1"/>
</dbReference>
<dbReference type="PRINTS" id="PR00320">
    <property type="entry name" value="GPROTEINBRPT"/>
</dbReference>
<dbReference type="SMART" id="SM00667">
    <property type="entry name" value="LisH"/>
    <property type="match status" value="1"/>
</dbReference>
<dbReference type="SMART" id="SM00320">
    <property type="entry name" value="WD40"/>
    <property type="match status" value="7"/>
</dbReference>
<dbReference type="SUPFAM" id="SSF109925">
    <property type="entry name" value="Lissencephaly-1 protein (Lis-1, PAF-AH alpha) N-terminal domain"/>
    <property type="match status" value="1"/>
</dbReference>
<dbReference type="SUPFAM" id="SSF50978">
    <property type="entry name" value="WD40 repeat-like"/>
    <property type="match status" value="1"/>
</dbReference>
<dbReference type="PROSITE" id="PS50896">
    <property type="entry name" value="LISH"/>
    <property type="match status" value="1"/>
</dbReference>
<dbReference type="PROSITE" id="PS00678">
    <property type="entry name" value="WD_REPEATS_1"/>
    <property type="match status" value="6"/>
</dbReference>
<dbReference type="PROSITE" id="PS50082">
    <property type="entry name" value="WD_REPEATS_2"/>
    <property type="match status" value="7"/>
</dbReference>
<dbReference type="PROSITE" id="PS50294">
    <property type="entry name" value="WD_REPEATS_REGION"/>
    <property type="match status" value="1"/>
</dbReference>
<evidence type="ECO:0000255" key="1">
    <source>
        <dbReference type="HAMAP-Rule" id="MF_03141"/>
    </source>
</evidence>
<accession>B4JWA1</accession>
<keyword id="KW-0131">Cell cycle</keyword>
<keyword id="KW-0132">Cell division</keyword>
<keyword id="KW-0175">Coiled coil</keyword>
<keyword id="KW-0963">Cytoplasm</keyword>
<keyword id="KW-0206">Cytoskeleton</keyword>
<keyword id="KW-0493">Microtubule</keyword>
<keyword id="KW-0498">Mitosis</keyword>
<keyword id="KW-1185">Reference proteome</keyword>
<keyword id="KW-0677">Repeat</keyword>
<keyword id="KW-0813">Transport</keyword>
<keyword id="KW-0853">WD repeat</keyword>
<sequence length="411" mass="46469">MKMVLSQRQREELNQAIADYLGTNGYADSLEAFRKEADLSTEAEKKFGGLLEKKWTSVIRLQKKVMELEAKLTEAEKEVIEGAPTKNKRTPGEWIPRPPEKYSLTGHRASITRVIFHPIFGLMVSASEDATIKIWDFETGEYERTLKGHTDSVQDVAFDAQGKLLVSCSADLSIKLWDFQQSYECVKTMHGHDHNVSSVAFVPAGDYVLSASRDRTIKMWEVATGYCVKTYTGHREWVRMVRVHIEGSIFATCSNDHTIRVWLTNSKDCKVELRDHEHTVECIAWAPEAAASAINEAAGADNKKGHHQGPFLASGSRDKTIRIWDVSVGQCLLTLNGHDNWVRGLAFHPGGKYLVSASDDKTIRVWDLRNKRCMKTLYAHQHFCTSIDFHKAHPYVISGSVDQTVKVWECR</sequence>
<name>LIS1_DROGR</name>
<protein>
    <recommendedName>
        <fullName evidence="1">Lissencephaly-1 homolog</fullName>
    </recommendedName>
</protein>
<gene>
    <name evidence="1" type="primary">Lis-1</name>
    <name type="ORF">GH22777</name>
</gene>